<proteinExistence type="evidence at transcript level"/>
<keyword id="KW-0066">ATP synthesis</keyword>
<keyword id="KW-0139">CF(1)</keyword>
<keyword id="KW-0150">Chloroplast</keyword>
<keyword id="KW-0375">Hydrogen ion transport</keyword>
<keyword id="KW-0406">Ion transport</keyword>
<keyword id="KW-0472">Membrane</keyword>
<keyword id="KW-0934">Plastid</keyword>
<keyword id="KW-0793">Thylakoid</keyword>
<keyword id="KW-0809">Transit peptide</keyword>
<keyword id="KW-0813">Transport</keyword>
<reference key="1">
    <citation type="submission" date="1995-06" db="EMBL/GenBank/DDBJ databases">
        <authorList>
            <person name="Apt K.E."/>
            <person name="Sukenik A."/>
            <person name="Grossman A.R."/>
        </authorList>
    </citation>
    <scope>NUCLEOTIDE SEQUENCE [MRNA]</scope>
</reference>
<name>ATPG_PHATR</name>
<dbReference type="EMBL" id="U29898">
    <property type="protein sequence ID" value="AAA73506.1"/>
    <property type="molecule type" value="mRNA"/>
</dbReference>
<dbReference type="SMR" id="Q41075"/>
<dbReference type="HOGENOM" id="CLU_050669_0_0_1"/>
<dbReference type="GO" id="GO:0009535">
    <property type="term" value="C:chloroplast thylakoid membrane"/>
    <property type="evidence" value="ECO:0007669"/>
    <property type="project" value="UniProtKB-SubCell"/>
</dbReference>
<dbReference type="GO" id="GO:0045259">
    <property type="term" value="C:proton-transporting ATP synthase complex"/>
    <property type="evidence" value="ECO:0007669"/>
    <property type="project" value="UniProtKB-KW"/>
</dbReference>
<dbReference type="GO" id="GO:0046933">
    <property type="term" value="F:proton-transporting ATP synthase activity, rotational mechanism"/>
    <property type="evidence" value="ECO:0007669"/>
    <property type="project" value="InterPro"/>
</dbReference>
<dbReference type="CDD" id="cd12151">
    <property type="entry name" value="F1-ATPase_gamma"/>
    <property type="match status" value="1"/>
</dbReference>
<dbReference type="FunFam" id="3.40.1380.10:FF:000006">
    <property type="entry name" value="ATP synthase gamma chain"/>
    <property type="match status" value="1"/>
</dbReference>
<dbReference type="FunFam" id="1.10.287.80:FF:000003">
    <property type="entry name" value="ATP synthase gamma chain, chloroplastic"/>
    <property type="match status" value="1"/>
</dbReference>
<dbReference type="Gene3D" id="3.40.1380.10">
    <property type="match status" value="1"/>
</dbReference>
<dbReference type="Gene3D" id="1.10.287.80">
    <property type="entry name" value="ATP synthase, gamma subunit, helix hairpin domain"/>
    <property type="match status" value="2"/>
</dbReference>
<dbReference type="HAMAP" id="MF_00815">
    <property type="entry name" value="ATP_synth_gamma_bact"/>
    <property type="match status" value="1"/>
</dbReference>
<dbReference type="InterPro" id="IPR035968">
    <property type="entry name" value="ATP_synth_F1_ATPase_gsu"/>
</dbReference>
<dbReference type="InterPro" id="IPR000131">
    <property type="entry name" value="ATP_synth_F1_gsu"/>
</dbReference>
<dbReference type="InterPro" id="IPR023632">
    <property type="entry name" value="ATP_synth_F1_gsu_CS"/>
</dbReference>
<dbReference type="NCBIfam" id="TIGR01146">
    <property type="entry name" value="ATPsyn_F1gamma"/>
    <property type="match status" value="1"/>
</dbReference>
<dbReference type="NCBIfam" id="NF004145">
    <property type="entry name" value="PRK05621.1-2"/>
    <property type="match status" value="1"/>
</dbReference>
<dbReference type="PANTHER" id="PTHR11693">
    <property type="entry name" value="ATP SYNTHASE GAMMA CHAIN"/>
    <property type="match status" value="1"/>
</dbReference>
<dbReference type="PANTHER" id="PTHR11693:SF41">
    <property type="entry name" value="ATP SYNTHASE GAMMA CHAIN, CHLOROPLASTIC"/>
    <property type="match status" value="1"/>
</dbReference>
<dbReference type="Pfam" id="PF00231">
    <property type="entry name" value="ATP-synt"/>
    <property type="match status" value="1"/>
</dbReference>
<dbReference type="PRINTS" id="PR00126">
    <property type="entry name" value="ATPASEGAMMA"/>
</dbReference>
<dbReference type="SUPFAM" id="SSF52943">
    <property type="entry name" value="ATP synthase (F1-ATPase), gamma subunit"/>
    <property type="match status" value="1"/>
</dbReference>
<dbReference type="PROSITE" id="PS00153">
    <property type="entry name" value="ATPASE_GAMMA"/>
    <property type="match status" value="1"/>
</dbReference>
<gene>
    <name type="primary">ATPC</name>
</gene>
<comment type="function">
    <text>Produces ATP from ADP in the presence of a proton gradient across the membrane. The gamma chain is believed to be important in regulating ATPase activity and the flow of protons through the CF(0) complex.</text>
</comment>
<comment type="subunit">
    <text evidence="1">F-type ATPases have 2 components, CF(1) - the catalytic core - and CF(0) - the membrane proton channel. CF(1) has five subunits: alpha(3), beta(3), gamma(1), delta(1), epsilon(1). CF(0) has four main subunits: a, b, b' and c (By similarity).</text>
</comment>
<comment type="subcellular location">
    <subcellularLocation>
        <location evidence="1">Plastid</location>
        <location evidence="1">Chloroplast thylakoid membrane</location>
        <topology evidence="1">Peripheral membrane protein</topology>
    </subcellularLocation>
</comment>
<comment type="similarity">
    <text evidence="3">Belongs to the ATPase gamma chain family.</text>
</comment>
<feature type="transit peptide" description="Chloroplast" evidence="2">
    <location>
        <begin position="1"/>
        <end position="54"/>
    </location>
</feature>
<feature type="chain" id="PRO_0000002679" description="ATP synthase gamma chain, chloroplastic">
    <location>
        <begin position="55"/>
        <end position="370"/>
    </location>
</feature>
<feature type="active site" evidence="1">
    <location>
        <position position="145"/>
    </location>
</feature>
<organism>
    <name type="scientific">Phaeodactylum tricornutum</name>
    <name type="common">Diatom</name>
    <dbReference type="NCBI Taxonomy" id="2850"/>
    <lineage>
        <taxon>Eukaryota</taxon>
        <taxon>Sar</taxon>
        <taxon>Stramenopiles</taxon>
        <taxon>Ochrophyta</taxon>
        <taxon>Bacillariophyta</taxon>
        <taxon>Bacillariophyceae</taxon>
        <taxon>Bacillariophycidae</taxon>
        <taxon>Naviculales</taxon>
        <taxon>Phaeodactylaceae</taxon>
        <taxon>Phaeodactylum</taxon>
    </lineage>
</organism>
<sequence length="370" mass="40217">MRSFCIAALLAVASAFTTQPTSFTVKTANVGERASGVFPEQSSAHRTRKATIVMDGKANAIRDRITSVKNTRKITMAMKLVRAAPKVRRAQDAVLATRPFSETLQSVFGGLIQRLGGESVDLPLLTEREVKKVTLLVITGDRGLCGGYNSFMIKKAEARFNELKKNGVEADLILVGKKGIAYFERRGFPIRKKYETGQNPTAKQALAIAEEVSSTFLSGESDAVELLYTKFVSLIASSPSIRTLVPFSASDITAKGDEVFQLTSESGQFGVERTELDVAAPQEFPNDMIFEQDPIQIVNAILPLYLNGQILRTLQESVASELAARMQSMQSASDNAGSLAKQLNLEYNRARQAAVTQELLEIISGASALD</sequence>
<evidence type="ECO:0000250" key="1"/>
<evidence type="ECO:0000255" key="2"/>
<evidence type="ECO:0000305" key="3"/>
<accession>Q41075</accession>
<protein>
    <recommendedName>
        <fullName>ATP synthase gamma chain, chloroplastic</fullName>
    </recommendedName>
    <alternativeName>
        <fullName>F-ATPase gamma subunit</fullName>
    </alternativeName>
</protein>